<comment type="function">
    <text evidence="1">Member of the two-component regulatory system BtsS/BtsR. BtsS is a high-affinity receptor for extracellular pyruvate that activates BtsR by phosphorylation.</text>
</comment>
<comment type="catalytic activity">
    <reaction evidence="1">
        <text>ATP + protein L-histidine = ADP + protein N-phospho-L-histidine.</text>
        <dbReference type="EC" id="2.7.13.3"/>
    </reaction>
</comment>
<comment type="subcellular location">
    <subcellularLocation>
        <location evidence="1">Cell inner membrane</location>
        <topology evidence="2">Multi-pass membrane protein</topology>
    </subcellularLocation>
</comment>
<comment type="PTM">
    <text evidence="1">Autophosphorylated.</text>
</comment>
<comment type="sequence caution" evidence="3">
    <conflict type="erroneous initiation">
        <sequence resource="EMBL-CDS" id="AAN81112"/>
    </conflict>
    <text>Extended N-terminus.</text>
</comment>
<reference key="1">
    <citation type="journal article" date="2002" name="Proc. Natl. Acad. Sci. U.S.A.">
        <title>Extensive mosaic structure revealed by the complete genome sequence of uropathogenic Escherichia coli.</title>
        <authorList>
            <person name="Welch R.A."/>
            <person name="Burland V."/>
            <person name="Plunkett G. III"/>
            <person name="Redford P."/>
            <person name="Roesch P."/>
            <person name="Rasko D."/>
            <person name="Buckles E.L."/>
            <person name="Liou S.-R."/>
            <person name="Boutin A."/>
            <person name="Hackett J."/>
            <person name="Stroud D."/>
            <person name="Mayhew G.F."/>
            <person name="Rose D.J."/>
            <person name="Zhou S."/>
            <person name="Schwartz D.C."/>
            <person name="Perna N.T."/>
            <person name="Mobley H.L.T."/>
            <person name="Donnenberg M.S."/>
            <person name="Blattner F.R."/>
        </authorList>
    </citation>
    <scope>NUCLEOTIDE SEQUENCE [LARGE SCALE GENOMIC DNA]</scope>
    <source>
        <strain>CFT073 / ATCC 700928 / UPEC</strain>
    </source>
</reference>
<name>BTSS_ECOL6</name>
<feature type="chain" id="PRO_0000042843" description="Sensor histidine kinase BtsS">
    <location>
        <begin position="1"/>
        <end position="561"/>
    </location>
</feature>
<feature type="topological domain" description="Cytoplasmic" evidence="3">
    <location>
        <begin position="1"/>
        <end position="3"/>
    </location>
</feature>
<feature type="transmembrane region" description="Helical" evidence="2">
    <location>
        <begin position="4"/>
        <end position="24"/>
    </location>
</feature>
<feature type="topological domain" description="Periplasmic" evidence="3">
    <location>
        <begin position="25"/>
        <end position="43"/>
    </location>
</feature>
<feature type="transmembrane region" description="Helical" evidence="2">
    <location>
        <begin position="44"/>
        <end position="64"/>
    </location>
</feature>
<feature type="topological domain" description="Cytoplasmic" evidence="3">
    <location>
        <begin position="65"/>
        <end position="72"/>
    </location>
</feature>
<feature type="transmembrane region" description="Helical" evidence="2">
    <location>
        <begin position="73"/>
        <end position="93"/>
    </location>
</feature>
<feature type="topological domain" description="Periplasmic" evidence="3">
    <location>
        <begin position="94"/>
        <end position="108"/>
    </location>
</feature>
<feature type="transmembrane region" description="Helical" evidence="2">
    <location>
        <begin position="109"/>
        <end position="129"/>
    </location>
</feature>
<feature type="topological domain" description="Cytoplasmic" evidence="3">
    <location>
        <begin position="130"/>
        <end position="140"/>
    </location>
</feature>
<feature type="transmembrane region" description="Helical" evidence="2">
    <location>
        <begin position="141"/>
        <end position="161"/>
    </location>
</feature>
<feature type="topological domain" description="Periplasmic" evidence="3">
    <location>
        <begin position="162"/>
        <end position="170"/>
    </location>
</feature>
<feature type="transmembrane region" description="Helical" evidence="2">
    <location>
        <begin position="171"/>
        <end position="191"/>
    </location>
</feature>
<feature type="topological domain" description="Cytoplasmic" evidence="1">
    <location>
        <begin position="192"/>
        <end position="561"/>
    </location>
</feature>
<feature type="domain" description="Histidine kinase">
    <location>
        <begin position="354"/>
        <end position="559"/>
    </location>
</feature>
<keyword id="KW-0067">ATP-binding</keyword>
<keyword id="KW-0997">Cell inner membrane</keyword>
<keyword id="KW-1003">Cell membrane</keyword>
<keyword id="KW-0418">Kinase</keyword>
<keyword id="KW-0472">Membrane</keyword>
<keyword id="KW-0547">Nucleotide-binding</keyword>
<keyword id="KW-0597">Phosphoprotein</keyword>
<keyword id="KW-1185">Reference proteome</keyword>
<keyword id="KW-0808">Transferase</keyword>
<keyword id="KW-0812">Transmembrane</keyword>
<keyword id="KW-1133">Transmembrane helix</keyword>
<keyword id="KW-0902">Two-component regulatory system</keyword>
<dbReference type="EC" id="2.7.13.3" evidence="1"/>
<dbReference type="EMBL" id="AE014075">
    <property type="protein sequence ID" value="AAN81112.1"/>
    <property type="status" value="ALT_INIT"/>
    <property type="molecule type" value="Genomic_DNA"/>
</dbReference>
<dbReference type="RefSeq" id="WP_001295431.1">
    <property type="nucleotide sequence ID" value="NZ_CP051263.1"/>
</dbReference>
<dbReference type="SMR" id="P0AD15"/>
<dbReference type="STRING" id="199310.c2656"/>
<dbReference type="GeneID" id="75206372"/>
<dbReference type="KEGG" id="ecc:c2656"/>
<dbReference type="eggNOG" id="COG3275">
    <property type="taxonomic scope" value="Bacteria"/>
</dbReference>
<dbReference type="HOGENOM" id="CLU_020473_3_3_6"/>
<dbReference type="Proteomes" id="UP000001410">
    <property type="component" value="Chromosome"/>
</dbReference>
<dbReference type="GO" id="GO:0005886">
    <property type="term" value="C:plasma membrane"/>
    <property type="evidence" value="ECO:0007669"/>
    <property type="project" value="UniProtKB-SubCell"/>
</dbReference>
<dbReference type="GO" id="GO:0005524">
    <property type="term" value="F:ATP binding"/>
    <property type="evidence" value="ECO:0007669"/>
    <property type="project" value="UniProtKB-KW"/>
</dbReference>
<dbReference type="GO" id="GO:0000155">
    <property type="term" value="F:phosphorelay sensor kinase activity"/>
    <property type="evidence" value="ECO:0007669"/>
    <property type="project" value="InterPro"/>
</dbReference>
<dbReference type="GO" id="GO:0071555">
    <property type="term" value="P:cell wall organization"/>
    <property type="evidence" value="ECO:0007669"/>
    <property type="project" value="InterPro"/>
</dbReference>
<dbReference type="CDD" id="cd16956">
    <property type="entry name" value="HATPase_YehU-like"/>
    <property type="match status" value="1"/>
</dbReference>
<dbReference type="FunFam" id="3.30.450.40:FF:000013">
    <property type="entry name" value="Sensor histidine kinase YehU"/>
    <property type="match status" value="1"/>
</dbReference>
<dbReference type="Gene3D" id="3.30.450.40">
    <property type="match status" value="1"/>
</dbReference>
<dbReference type="Gene3D" id="3.30.565.10">
    <property type="entry name" value="Histidine kinase-like ATPase, C-terminal domain"/>
    <property type="match status" value="1"/>
</dbReference>
<dbReference type="InterPro" id="IPR050640">
    <property type="entry name" value="Bact_2-comp_sensor_kinase"/>
</dbReference>
<dbReference type="InterPro" id="IPR003018">
    <property type="entry name" value="GAF"/>
</dbReference>
<dbReference type="InterPro" id="IPR029016">
    <property type="entry name" value="GAF-like_dom_sf"/>
</dbReference>
<dbReference type="InterPro" id="IPR036890">
    <property type="entry name" value="HATPase_C_sf"/>
</dbReference>
<dbReference type="InterPro" id="IPR010559">
    <property type="entry name" value="Sig_transdc_His_kin_internal"/>
</dbReference>
<dbReference type="InterPro" id="IPR011620">
    <property type="entry name" value="Sig_transdc_His_kinase_LytS_TM"/>
</dbReference>
<dbReference type="PANTHER" id="PTHR34220:SF10">
    <property type="entry name" value="SENSOR HISTIDINE KINASE BTSS"/>
    <property type="match status" value="1"/>
</dbReference>
<dbReference type="PANTHER" id="PTHR34220">
    <property type="entry name" value="SENSOR HISTIDINE KINASE YPDA"/>
    <property type="match status" value="1"/>
</dbReference>
<dbReference type="Pfam" id="PF07694">
    <property type="entry name" value="5TM-5TMR_LYT"/>
    <property type="match status" value="1"/>
</dbReference>
<dbReference type="Pfam" id="PF13185">
    <property type="entry name" value="GAF_2"/>
    <property type="match status" value="1"/>
</dbReference>
<dbReference type="Pfam" id="PF06580">
    <property type="entry name" value="His_kinase"/>
    <property type="match status" value="1"/>
</dbReference>
<dbReference type="SMART" id="SM00065">
    <property type="entry name" value="GAF"/>
    <property type="match status" value="1"/>
</dbReference>
<dbReference type="SUPFAM" id="SSF55874">
    <property type="entry name" value="ATPase domain of HSP90 chaperone/DNA topoisomerase II/histidine kinase"/>
    <property type="match status" value="1"/>
</dbReference>
<dbReference type="SUPFAM" id="SSF55781">
    <property type="entry name" value="GAF domain-like"/>
    <property type="match status" value="1"/>
</dbReference>
<evidence type="ECO:0000250" key="1">
    <source>
        <dbReference type="UniProtKB" id="P0AD14"/>
    </source>
</evidence>
<evidence type="ECO:0000255" key="2"/>
<evidence type="ECO:0000305" key="3"/>
<organism>
    <name type="scientific">Escherichia coli O6:H1 (strain CFT073 / ATCC 700928 / UPEC)</name>
    <dbReference type="NCBI Taxonomy" id="199310"/>
    <lineage>
        <taxon>Bacteria</taxon>
        <taxon>Pseudomonadati</taxon>
        <taxon>Pseudomonadota</taxon>
        <taxon>Gammaproteobacteria</taxon>
        <taxon>Enterobacterales</taxon>
        <taxon>Enterobacteriaceae</taxon>
        <taxon>Escherichia</taxon>
    </lineage>
</organism>
<sequence length="561" mass="62092">MYDFNLVLLLLQQMCVFLVIAWLMSKTPLFIPLMQVTVRLPHKFLCYIVFSIFCIMGTWFGLHIDDSIANTRAIGAVMGGLLGGPVVGGLVGLTGGLHRYSMGGMTALSCMISTIVEGLLGGLVHSILIRRGRTDKVFNPITAGAVTFVAEMVQMLIILAIARPYEDAVRLVSNIAAPMMVTNTVGAALFMRILLDKRAMFEKYTSAFSATALKVAASTEGILRQGFNEVNSMKVAQVLYQELDIGAVAITDREKLLAFTGIGDDHHLPGKPISSTYTLKAIETGEVVYADGNEVPYRCSLHPQCKLGSTLVIPLRGENQRVMGTIKLYEAKNRLFSSINRTLGEGIAQLLSAQILAGQYERQKAMLTQSEIKLLHAQVNPHFLFNALNTIKAVIRRDSEQASQLVQYLSTFFRKNLKRPSEFVTLADEIEHVNAYLQIEKARFQSRLQVNIAIPQELSQQQLPAFTLQPIVENAIKHGTSQLLDTGRVAISARREGQHLMLEIEDNAGLYQPVTNASGLGMNLVDKRLRERFGDDYGISVACEPDSYTRITLRLPWRDEA</sequence>
<protein>
    <recommendedName>
        <fullName evidence="1">Sensor histidine kinase BtsS</fullName>
        <ecNumber evidence="1">2.7.13.3</ecNumber>
    </recommendedName>
</protein>
<proteinExistence type="inferred from homology"/>
<accession>P0AD15</accession>
<accession>P33357</accession>
<accession>P76434</accession>
<gene>
    <name evidence="1" type="primary">btsS</name>
    <name type="synonym">yehU</name>
    <name type="ordered locus">c2656</name>
</gene>